<name>DBP2_CHAGB</name>
<sequence>MSSYGGGGYSSRGGGGGYSGGYDRNGGGGGGYSGSNGYSGGGGGYGGGGYGGGGGGYGGGGGGYGGGYGGGGGDRMSNLGAGLQKQNWDLDTLPKFEKSFYQEHPNVAARSQAEVDKFRRDHAMTVAGNNVPSPVETFDEAGFPRYVMDEVKAQGFPAPTAIQSQGWPMALSGRDVVGIAETGSGKTLTYCLPAIVHINAQPLLAPGDGPIVLVLAPTRELAVQIQQEITKFGKSSRIRNTCVYGGVPKGPQTRDLSRGVEVCIATPGRLIDMLESGRTNLRRVTYLVLDEADRMLDMGFEPQIRKIIGQIRPDRQTCMWSATWPKEVRALASDFLTDFIQVNIGSMDLAANHRITQVVEVVNESEKRDKMIKHLEKIMEDKESQNKILIFTGTKRVADEITRFLRQDGWPALSIHGDKQQNERDWVLDQFKTGKSPIMVATDVASRGIDVRNITHVLNYDYPNNSEDYIHRIGRTGRAGAKGTAITFFTTDNSKQARDLVGVLQEAKQHIDPRLAEMVRYGGGGGNSRYGGYRGRGGGGFRGGRSQGANGPNAMPMGNRRW</sequence>
<reference key="1">
    <citation type="journal article" date="2015" name="Genome Announc.">
        <title>Draft genome sequence of the cellulolytic fungus Chaetomium globosum.</title>
        <authorList>
            <person name="Cuomo C.A."/>
            <person name="Untereiner W.A."/>
            <person name="Ma L.-J."/>
            <person name="Grabherr M."/>
            <person name="Birren B.W."/>
        </authorList>
    </citation>
    <scope>NUCLEOTIDE SEQUENCE [LARGE SCALE GENOMIC DNA]</scope>
    <source>
        <strain>ATCC 6205 / CBS 148.51 / DSM 1962 / NBRC 6347 / NRRL 1970</strain>
    </source>
</reference>
<protein>
    <recommendedName>
        <fullName>ATP-dependent RNA helicase DBP2</fullName>
        <ecNumber>3.6.4.13</ecNumber>
    </recommendedName>
</protein>
<dbReference type="EC" id="3.6.4.13"/>
<dbReference type="EMBL" id="CH408031">
    <property type="protein sequence ID" value="EAQ88926.1"/>
    <property type="molecule type" value="Genomic_DNA"/>
</dbReference>
<dbReference type="RefSeq" id="XP_001221640.1">
    <property type="nucleotide sequence ID" value="XM_001221639.1"/>
</dbReference>
<dbReference type="SMR" id="Q2H720"/>
<dbReference type="FunCoup" id="Q2H720">
    <property type="interactions" value="1041"/>
</dbReference>
<dbReference type="STRING" id="306901.Q2H720"/>
<dbReference type="GeneID" id="4390416"/>
<dbReference type="VEuPathDB" id="FungiDB:CHGG_05545"/>
<dbReference type="eggNOG" id="KOG0331">
    <property type="taxonomic scope" value="Eukaryota"/>
</dbReference>
<dbReference type="HOGENOM" id="CLU_003041_16_9_1"/>
<dbReference type="InParanoid" id="Q2H720"/>
<dbReference type="OMA" id="STMPKFE"/>
<dbReference type="OrthoDB" id="196131at2759"/>
<dbReference type="Proteomes" id="UP000001056">
    <property type="component" value="Unassembled WGS sequence"/>
</dbReference>
<dbReference type="GO" id="GO:0005737">
    <property type="term" value="C:cytoplasm"/>
    <property type="evidence" value="ECO:0007669"/>
    <property type="project" value="UniProtKB-SubCell"/>
</dbReference>
<dbReference type="GO" id="GO:0005634">
    <property type="term" value="C:nucleus"/>
    <property type="evidence" value="ECO:0007669"/>
    <property type="project" value="UniProtKB-SubCell"/>
</dbReference>
<dbReference type="GO" id="GO:0005524">
    <property type="term" value="F:ATP binding"/>
    <property type="evidence" value="ECO:0007669"/>
    <property type="project" value="UniProtKB-KW"/>
</dbReference>
<dbReference type="GO" id="GO:0016887">
    <property type="term" value="F:ATP hydrolysis activity"/>
    <property type="evidence" value="ECO:0007669"/>
    <property type="project" value="RHEA"/>
</dbReference>
<dbReference type="GO" id="GO:0003723">
    <property type="term" value="F:RNA binding"/>
    <property type="evidence" value="ECO:0007669"/>
    <property type="project" value="UniProtKB-KW"/>
</dbReference>
<dbReference type="GO" id="GO:0003724">
    <property type="term" value="F:RNA helicase activity"/>
    <property type="evidence" value="ECO:0007669"/>
    <property type="project" value="UniProtKB-EC"/>
</dbReference>
<dbReference type="GO" id="GO:0000184">
    <property type="term" value="P:nuclear-transcribed mRNA catabolic process, nonsense-mediated decay"/>
    <property type="evidence" value="ECO:0007669"/>
    <property type="project" value="UniProtKB-KW"/>
</dbReference>
<dbReference type="GO" id="GO:0006364">
    <property type="term" value="P:rRNA processing"/>
    <property type="evidence" value="ECO:0007669"/>
    <property type="project" value="UniProtKB-KW"/>
</dbReference>
<dbReference type="CDD" id="cd17966">
    <property type="entry name" value="DEADc_DDX5_DDX17"/>
    <property type="match status" value="1"/>
</dbReference>
<dbReference type="CDD" id="cd18787">
    <property type="entry name" value="SF2_C_DEAD"/>
    <property type="match status" value="1"/>
</dbReference>
<dbReference type="FunFam" id="3.40.50.300:FF:000008">
    <property type="entry name" value="ATP-dependent RNA helicase RhlB"/>
    <property type="match status" value="1"/>
</dbReference>
<dbReference type="FunFam" id="3.40.50.300:FF:000079">
    <property type="entry name" value="probable ATP-dependent RNA helicase DDX17"/>
    <property type="match status" value="1"/>
</dbReference>
<dbReference type="Gene3D" id="3.40.50.300">
    <property type="entry name" value="P-loop containing nucleotide triphosphate hydrolases"/>
    <property type="match status" value="2"/>
</dbReference>
<dbReference type="InterPro" id="IPR011545">
    <property type="entry name" value="DEAD/DEAH_box_helicase_dom"/>
</dbReference>
<dbReference type="InterPro" id="IPR014001">
    <property type="entry name" value="Helicase_ATP-bd"/>
</dbReference>
<dbReference type="InterPro" id="IPR001650">
    <property type="entry name" value="Helicase_C-like"/>
</dbReference>
<dbReference type="InterPro" id="IPR027417">
    <property type="entry name" value="P-loop_NTPase"/>
</dbReference>
<dbReference type="InterPro" id="IPR000629">
    <property type="entry name" value="RNA-helicase_DEAD-box_CS"/>
</dbReference>
<dbReference type="InterPro" id="IPR014014">
    <property type="entry name" value="RNA_helicase_DEAD_Q_motif"/>
</dbReference>
<dbReference type="PANTHER" id="PTHR47958">
    <property type="entry name" value="ATP-DEPENDENT RNA HELICASE DBP3"/>
    <property type="match status" value="1"/>
</dbReference>
<dbReference type="Pfam" id="PF00270">
    <property type="entry name" value="DEAD"/>
    <property type="match status" value="1"/>
</dbReference>
<dbReference type="Pfam" id="PF00271">
    <property type="entry name" value="Helicase_C"/>
    <property type="match status" value="1"/>
</dbReference>
<dbReference type="SMART" id="SM00487">
    <property type="entry name" value="DEXDc"/>
    <property type="match status" value="1"/>
</dbReference>
<dbReference type="SMART" id="SM00490">
    <property type="entry name" value="HELICc"/>
    <property type="match status" value="1"/>
</dbReference>
<dbReference type="SUPFAM" id="SSF52540">
    <property type="entry name" value="P-loop containing nucleoside triphosphate hydrolases"/>
    <property type="match status" value="1"/>
</dbReference>
<dbReference type="PROSITE" id="PS00039">
    <property type="entry name" value="DEAD_ATP_HELICASE"/>
    <property type="match status" value="1"/>
</dbReference>
<dbReference type="PROSITE" id="PS51192">
    <property type="entry name" value="HELICASE_ATP_BIND_1"/>
    <property type="match status" value="1"/>
</dbReference>
<dbReference type="PROSITE" id="PS51194">
    <property type="entry name" value="HELICASE_CTER"/>
    <property type="match status" value="1"/>
</dbReference>
<dbReference type="PROSITE" id="PS51195">
    <property type="entry name" value="Q_MOTIF"/>
    <property type="match status" value="1"/>
</dbReference>
<feature type="chain" id="PRO_0000255990" description="ATP-dependent RNA helicase DBP2">
    <location>
        <begin position="1"/>
        <end position="562"/>
    </location>
</feature>
<feature type="domain" description="Helicase ATP-binding" evidence="2">
    <location>
        <begin position="167"/>
        <end position="342"/>
    </location>
</feature>
<feature type="domain" description="Helicase C-terminal" evidence="3">
    <location>
        <begin position="370"/>
        <end position="519"/>
    </location>
</feature>
<feature type="region of interest" description="Disordered" evidence="4">
    <location>
        <begin position="538"/>
        <end position="562"/>
    </location>
</feature>
<feature type="short sequence motif" description="Q motif">
    <location>
        <begin position="136"/>
        <end position="164"/>
    </location>
</feature>
<feature type="short sequence motif" description="DEAD box">
    <location>
        <begin position="290"/>
        <end position="293"/>
    </location>
</feature>
<feature type="binding site" evidence="2">
    <location>
        <begin position="180"/>
        <end position="187"/>
    </location>
    <ligand>
        <name>ATP</name>
        <dbReference type="ChEBI" id="CHEBI:30616"/>
    </ligand>
</feature>
<gene>
    <name type="primary">DBP2</name>
    <name type="ORF">CHGG_05545</name>
</gene>
<evidence type="ECO:0000250" key="1"/>
<evidence type="ECO:0000255" key="2">
    <source>
        <dbReference type="PROSITE-ProRule" id="PRU00541"/>
    </source>
</evidence>
<evidence type="ECO:0000255" key="3">
    <source>
        <dbReference type="PROSITE-ProRule" id="PRU00542"/>
    </source>
</evidence>
<evidence type="ECO:0000256" key="4">
    <source>
        <dbReference type="SAM" id="MobiDB-lite"/>
    </source>
</evidence>
<evidence type="ECO:0000305" key="5"/>
<comment type="function">
    <text evidence="1">ATP-dependent RNA helicase involved nonsense-mediated mRNA decay and ribosome biogenesis through rRNA processing.</text>
</comment>
<comment type="catalytic activity">
    <reaction>
        <text>ATP + H2O = ADP + phosphate + H(+)</text>
        <dbReference type="Rhea" id="RHEA:13065"/>
        <dbReference type="ChEBI" id="CHEBI:15377"/>
        <dbReference type="ChEBI" id="CHEBI:15378"/>
        <dbReference type="ChEBI" id="CHEBI:30616"/>
        <dbReference type="ChEBI" id="CHEBI:43474"/>
        <dbReference type="ChEBI" id="CHEBI:456216"/>
        <dbReference type="EC" id="3.6.4.13"/>
    </reaction>
</comment>
<comment type="subunit">
    <text evidence="1">Associates with polysomes.</text>
</comment>
<comment type="subcellular location">
    <subcellularLocation>
        <location evidence="1">Cytoplasm</location>
    </subcellularLocation>
    <subcellularLocation>
        <location evidence="1">Nucleus</location>
    </subcellularLocation>
</comment>
<comment type="domain">
    <text>The Q motif is unique to and characteristic of the DEAD box family of RNA helicases and controls ATP binding and hydrolysis.</text>
</comment>
<comment type="similarity">
    <text evidence="5">Belongs to the DEAD box helicase family. DDX5/DBP2 subfamily.</text>
</comment>
<proteinExistence type="inferred from homology"/>
<accession>Q2H720</accession>
<keyword id="KW-0067">ATP-binding</keyword>
<keyword id="KW-0963">Cytoplasm</keyword>
<keyword id="KW-0347">Helicase</keyword>
<keyword id="KW-0378">Hydrolase</keyword>
<keyword id="KW-0866">Nonsense-mediated mRNA decay</keyword>
<keyword id="KW-0547">Nucleotide-binding</keyword>
<keyword id="KW-0539">Nucleus</keyword>
<keyword id="KW-1185">Reference proteome</keyword>
<keyword id="KW-0690">Ribosome biogenesis</keyword>
<keyword id="KW-0694">RNA-binding</keyword>
<keyword id="KW-0698">rRNA processing</keyword>
<organism>
    <name type="scientific">Chaetomium globosum (strain ATCC 6205 / CBS 148.51 / DSM 1962 / NBRC 6347 / NRRL 1970)</name>
    <name type="common">Soil fungus</name>
    <dbReference type="NCBI Taxonomy" id="306901"/>
    <lineage>
        <taxon>Eukaryota</taxon>
        <taxon>Fungi</taxon>
        <taxon>Dikarya</taxon>
        <taxon>Ascomycota</taxon>
        <taxon>Pezizomycotina</taxon>
        <taxon>Sordariomycetes</taxon>
        <taxon>Sordariomycetidae</taxon>
        <taxon>Sordariales</taxon>
        <taxon>Chaetomiaceae</taxon>
        <taxon>Chaetomium</taxon>
    </lineage>
</organism>